<feature type="chain" id="PRO_0000321296" description="Argininosuccinate synthase">
    <location>
        <begin position="1"/>
        <end position="409"/>
    </location>
</feature>
<feature type="binding site" evidence="1">
    <location>
        <begin position="12"/>
        <end position="20"/>
    </location>
    <ligand>
        <name>ATP</name>
        <dbReference type="ChEBI" id="CHEBI:30616"/>
    </ligand>
</feature>
<feature type="binding site" evidence="1">
    <location>
        <position position="39"/>
    </location>
    <ligand>
        <name>ATP</name>
        <dbReference type="ChEBI" id="CHEBI:30616"/>
    </ligand>
</feature>
<feature type="binding site" evidence="1">
    <location>
        <position position="90"/>
    </location>
    <ligand>
        <name>L-citrulline</name>
        <dbReference type="ChEBI" id="CHEBI:57743"/>
    </ligand>
</feature>
<feature type="binding site" evidence="1">
    <location>
        <position position="95"/>
    </location>
    <ligand>
        <name>L-citrulline</name>
        <dbReference type="ChEBI" id="CHEBI:57743"/>
    </ligand>
</feature>
<feature type="binding site" evidence="1">
    <location>
        <position position="120"/>
    </location>
    <ligand>
        <name>ATP</name>
        <dbReference type="ChEBI" id="CHEBI:30616"/>
    </ligand>
</feature>
<feature type="binding site" evidence="1">
    <location>
        <position position="122"/>
    </location>
    <ligand>
        <name>L-aspartate</name>
        <dbReference type="ChEBI" id="CHEBI:29991"/>
    </ligand>
</feature>
<feature type="binding site" evidence="1">
    <location>
        <position position="126"/>
    </location>
    <ligand>
        <name>L-aspartate</name>
        <dbReference type="ChEBI" id="CHEBI:29991"/>
    </ligand>
</feature>
<feature type="binding site" evidence="1">
    <location>
        <position position="126"/>
    </location>
    <ligand>
        <name>L-citrulline</name>
        <dbReference type="ChEBI" id="CHEBI:57743"/>
    </ligand>
</feature>
<feature type="binding site" evidence="1">
    <location>
        <position position="127"/>
    </location>
    <ligand>
        <name>L-aspartate</name>
        <dbReference type="ChEBI" id="CHEBI:29991"/>
    </ligand>
</feature>
<feature type="binding site" evidence="1">
    <location>
        <position position="130"/>
    </location>
    <ligand>
        <name>L-citrulline</name>
        <dbReference type="ChEBI" id="CHEBI:57743"/>
    </ligand>
</feature>
<feature type="binding site" evidence="1">
    <location>
        <position position="181"/>
    </location>
    <ligand>
        <name>L-citrulline</name>
        <dbReference type="ChEBI" id="CHEBI:57743"/>
    </ligand>
</feature>
<feature type="binding site" evidence="1">
    <location>
        <position position="190"/>
    </location>
    <ligand>
        <name>L-citrulline</name>
        <dbReference type="ChEBI" id="CHEBI:57743"/>
    </ligand>
</feature>
<feature type="binding site" evidence="1">
    <location>
        <position position="266"/>
    </location>
    <ligand>
        <name>L-citrulline</name>
        <dbReference type="ChEBI" id="CHEBI:57743"/>
    </ligand>
</feature>
<feature type="binding site" evidence="1">
    <location>
        <position position="278"/>
    </location>
    <ligand>
        <name>L-citrulline</name>
        <dbReference type="ChEBI" id="CHEBI:57743"/>
    </ligand>
</feature>
<sequence length="409" mass="44926">MAENSVKKVVLAYSGGLDTSVILRWLQTERGAEVVTFTADLGQGEELEPARRKAEMFGVKEIFVEDLRETFVKDFVFPMFRANALYEGQYLLGTSIARPLIAQRQIEIAEAVGADAVAHGATGKGNDQVRFELAYYALKPDVKVVAPWREWSLTSRTKLLEFAEAHQIPIAKDKRGEAPFSVDANLLHSSSEGKILEDPAQAPDEIVYQRTISPEAAPDVVTEISIDFAQGDAVALNGVALSPATLLTRLNELGRDNGIGRLDLVENRFVGMKSRGVYETPGGTILLAAHRAIESITLDREAAHLKDSLMPRYAELIYNGFWFSPERRMLQALIDASQNSVTGRVRLKLYKGNVIVAGRESPNSLYSARMVTFEDDEGAYNQQDAAGFIKLNALRLRLGGAIGRRGGAL</sequence>
<name>ASSY_ACICJ</name>
<keyword id="KW-0028">Amino-acid biosynthesis</keyword>
<keyword id="KW-0055">Arginine biosynthesis</keyword>
<keyword id="KW-0067">ATP-binding</keyword>
<keyword id="KW-0963">Cytoplasm</keyword>
<keyword id="KW-0436">Ligase</keyword>
<keyword id="KW-0547">Nucleotide-binding</keyword>
<keyword id="KW-1185">Reference proteome</keyword>
<gene>
    <name evidence="1" type="primary">argG</name>
    <name type="ordered locus">Acry_0747</name>
</gene>
<proteinExistence type="inferred from homology"/>
<organism>
    <name type="scientific">Acidiphilium cryptum (strain JF-5)</name>
    <dbReference type="NCBI Taxonomy" id="349163"/>
    <lineage>
        <taxon>Bacteria</taxon>
        <taxon>Pseudomonadati</taxon>
        <taxon>Pseudomonadota</taxon>
        <taxon>Alphaproteobacteria</taxon>
        <taxon>Acetobacterales</taxon>
        <taxon>Acidocellaceae</taxon>
        <taxon>Acidiphilium</taxon>
    </lineage>
</organism>
<evidence type="ECO:0000255" key="1">
    <source>
        <dbReference type="HAMAP-Rule" id="MF_00005"/>
    </source>
</evidence>
<dbReference type="EC" id="6.3.4.5" evidence="1"/>
<dbReference type="EMBL" id="CP000697">
    <property type="protein sequence ID" value="ABQ29967.1"/>
    <property type="molecule type" value="Genomic_DNA"/>
</dbReference>
<dbReference type="RefSeq" id="WP_011941747.1">
    <property type="nucleotide sequence ID" value="NC_009484.1"/>
</dbReference>
<dbReference type="SMR" id="A5FWI5"/>
<dbReference type="STRING" id="349163.Acry_0747"/>
<dbReference type="KEGG" id="acr:Acry_0747"/>
<dbReference type="eggNOG" id="COG0137">
    <property type="taxonomic scope" value="Bacteria"/>
</dbReference>
<dbReference type="HOGENOM" id="CLU_032784_4_2_5"/>
<dbReference type="UniPathway" id="UPA00068">
    <property type="reaction ID" value="UER00113"/>
</dbReference>
<dbReference type="Proteomes" id="UP000000245">
    <property type="component" value="Chromosome"/>
</dbReference>
<dbReference type="GO" id="GO:0005737">
    <property type="term" value="C:cytoplasm"/>
    <property type="evidence" value="ECO:0007669"/>
    <property type="project" value="UniProtKB-SubCell"/>
</dbReference>
<dbReference type="GO" id="GO:0004055">
    <property type="term" value="F:argininosuccinate synthase activity"/>
    <property type="evidence" value="ECO:0007669"/>
    <property type="project" value="UniProtKB-UniRule"/>
</dbReference>
<dbReference type="GO" id="GO:0005524">
    <property type="term" value="F:ATP binding"/>
    <property type="evidence" value="ECO:0007669"/>
    <property type="project" value="UniProtKB-UniRule"/>
</dbReference>
<dbReference type="GO" id="GO:0000053">
    <property type="term" value="P:argininosuccinate metabolic process"/>
    <property type="evidence" value="ECO:0007669"/>
    <property type="project" value="TreeGrafter"/>
</dbReference>
<dbReference type="GO" id="GO:0006526">
    <property type="term" value="P:L-arginine biosynthetic process"/>
    <property type="evidence" value="ECO:0007669"/>
    <property type="project" value="UniProtKB-UniRule"/>
</dbReference>
<dbReference type="GO" id="GO:0000050">
    <property type="term" value="P:urea cycle"/>
    <property type="evidence" value="ECO:0007669"/>
    <property type="project" value="TreeGrafter"/>
</dbReference>
<dbReference type="CDD" id="cd01999">
    <property type="entry name" value="ASS"/>
    <property type="match status" value="1"/>
</dbReference>
<dbReference type="FunFam" id="3.40.50.620:FF:000019">
    <property type="entry name" value="Argininosuccinate synthase"/>
    <property type="match status" value="1"/>
</dbReference>
<dbReference type="FunFam" id="3.90.1260.10:FF:000007">
    <property type="entry name" value="Argininosuccinate synthase"/>
    <property type="match status" value="1"/>
</dbReference>
<dbReference type="Gene3D" id="3.90.1260.10">
    <property type="entry name" value="Argininosuccinate synthetase, chain A, domain 2"/>
    <property type="match status" value="1"/>
</dbReference>
<dbReference type="Gene3D" id="3.40.50.620">
    <property type="entry name" value="HUPs"/>
    <property type="match status" value="1"/>
</dbReference>
<dbReference type="Gene3D" id="1.20.5.470">
    <property type="entry name" value="Single helix bin"/>
    <property type="match status" value="1"/>
</dbReference>
<dbReference type="HAMAP" id="MF_00005">
    <property type="entry name" value="Arg_succ_synth_type1"/>
    <property type="match status" value="1"/>
</dbReference>
<dbReference type="InterPro" id="IPR048268">
    <property type="entry name" value="Arginosuc_syn_C"/>
</dbReference>
<dbReference type="InterPro" id="IPR048267">
    <property type="entry name" value="Arginosuc_syn_N"/>
</dbReference>
<dbReference type="InterPro" id="IPR001518">
    <property type="entry name" value="Arginosuc_synth"/>
</dbReference>
<dbReference type="InterPro" id="IPR018223">
    <property type="entry name" value="Arginosuc_synth_CS"/>
</dbReference>
<dbReference type="InterPro" id="IPR023434">
    <property type="entry name" value="Arginosuc_synth_type_1_subfam"/>
</dbReference>
<dbReference type="InterPro" id="IPR024074">
    <property type="entry name" value="AS_cat/multimer_dom_body"/>
</dbReference>
<dbReference type="InterPro" id="IPR014729">
    <property type="entry name" value="Rossmann-like_a/b/a_fold"/>
</dbReference>
<dbReference type="NCBIfam" id="TIGR00032">
    <property type="entry name" value="argG"/>
    <property type="match status" value="1"/>
</dbReference>
<dbReference type="NCBIfam" id="NF001770">
    <property type="entry name" value="PRK00509.1"/>
    <property type="match status" value="1"/>
</dbReference>
<dbReference type="PANTHER" id="PTHR11587">
    <property type="entry name" value="ARGININOSUCCINATE SYNTHASE"/>
    <property type="match status" value="1"/>
</dbReference>
<dbReference type="PANTHER" id="PTHR11587:SF2">
    <property type="entry name" value="ARGININOSUCCINATE SYNTHASE"/>
    <property type="match status" value="1"/>
</dbReference>
<dbReference type="Pfam" id="PF20979">
    <property type="entry name" value="Arginosuc_syn_C"/>
    <property type="match status" value="1"/>
</dbReference>
<dbReference type="Pfam" id="PF00764">
    <property type="entry name" value="Arginosuc_synth"/>
    <property type="match status" value="1"/>
</dbReference>
<dbReference type="SUPFAM" id="SSF52402">
    <property type="entry name" value="Adenine nucleotide alpha hydrolases-like"/>
    <property type="match status" value="1"/>
</dbReference>
<dbReference type="SUPFAM" id="SSF69864">
    <property type="entry name" value="Argininosuccinate synthetase, C-terminal domain"/>
    <property type="match status" value="1"/>
</dbReference>
<dbReference type="PROSITE" id="PS00564">
    <property type="entry name" value="ARGININOSUCCIN_SYN_1"/>
    <property type="match status" value="1"/>
</dbReference>
<dbReference type="PROSITE" id="PS00565">
    <property type="entry name" value="ARGININOSUCCIN_SYN_2"/>
    <property type="match status" value="1"/>
</dbReference>
<accession>A5FWI5</accession>
<reference key="1">
    <citation type="submission" date="2007-05" db="EMBL/GenBank/DDBJ databases">
        <title>Complete sequence of chromosome of Acidiphilium cryptum JF-5.</title>
        <authorList>
            <consortium name="US DOE Joint Genome Institute"/>
            <person name="Copeland A."/>
            <person name="Lucas S."/>
            <person name="Lapidus A."/>
            <person name="Barry K."/>
            <person name="Detter J.C."/>
            <person name="Glavina del Rio T."/>
            <person name="Hammon N."/>
            <person name="Israni S."/>
            <person name="Dalin E."/>
            <person name="Tice H."/>
            <person name="Pitluck S."/>
            <person name="Sims D."/>
            <person name="Brettin T."/>
            <person name="Bruce D."/>
            <person name="Han C."/>
            <person name="Schmutz J."/>
            <person name="Larimer F."/>
            <person name="Land M."/>
            <person name="Hauser L."/>
            <person name="Kyrpides N."/>
            <person name="Kim E."/>
            <person name="Magnuson T."/>
            <person name="Richardson P."/>
        </authorList>
    </citation>
    <scope>NUCLEOTIDE SEQUENCE [LARGE SCALE GENOMIC DNA]</scope>
    <source>
        <strain>JF-5</strain>
    </source>
</reference>
<protein>
    <recommendedName>
        <fullName evidence="1">Argininosuccinate synthase</fullName>
        <ecNumber evidence="1">6.3.4.5</ecNumber>
    </recommendedName>
    <alternativeName>
        <fullName evidence="1">Citrulline--aspartate ligase</fullName>
    </alternativeName>
</protein>
<comment type="catalytic activity">
    <reaction evidence="1">
        <text>L-citrulline + L-aspartate + ATP = 2-(N(omega)-L-arginino)succinate + AMP + diphosphate + H(+)</text>
        <dbReference type="Rhea" id="RHEA:10932"/>
        <dbReference type="ChEBI" id="CHEBI:15378"/>
        <dbReference type="ChEBI" id="CHEBI:29991"/>
        <dbReference type="ChEBI" id="CHEBI:30616"/>
        <dbReference type="ChEBI" id="CHEBI:33019"/>
        <dbReference type="ChEBI" id="CHEBI:57472"/>
        <dbReference type="ChEBI" id="CHEBI:57743"/>
        <dbReference type="ChEBI" id="CHEBI:456215"/>
        <dbReference type="EC" id="6.3.4.5"/>
    </reaction>
</comment>
<comment type="pathway">
    <text evidence="1">Amino-acid biosynthesis; L-arginine biosynthesis; L-arginine from L-ornithine and carbamoyl phosphate: step 2/3.</text>
</comment>
<comment type="subunit">
    <text evidence="1">Homotetramer.</text>
</comment>
<comment type="subcellular location">
    <subcellularLocation>
        <location evidence="1">Cytoplasm</location>
    </subcellularLocation>
</comment>
<comment type="similarity">
    <text evidence="1">Belongs to the argininosuccinate synthase family. Type 1 subfamily.</text>
</comment>